<sequence length="213" mass="23572">MGKVLTMAMPKGRIFEEAAGLLRQAGYRLPEEFEESRKLIIDVPEENLRFILAKPMDVTTYVEHGVADAGIAGKDVMLEEERDVYEVLDLKISKCHLAVAGLPGADWNGVAPRIATKYPNVASSYFREQGEQVEIIKLNGSIELAPLIGLADRIVDIVSTGRTLKENGLVESEHICDITSRFIVNPVSYRMKDDVIDEMAARLARVVEGETAQ</sequence>
<gene>
    <name evidence="1" type="primary">hisG</name>
    <name type="ordered locus">RBAM_032130</name>
</gene>
<feature type="chain" id="PRO_1000063263" description="ATP phosphoribosyltransferase">
    <location>
        <begin position="1"/>
        <end position="213"/>
    </location>
</feature>
<dbReference type="EC" id="2.4.2.17" evidence="1"/>
<dbReference type="EMBL" id="CP000560">
    <property type="protein sequence ID" value="ABS75543.1"/>
    <property type="molecule type" value="Genomic_DNA"/>
</dbReference>
<dbReference type="RefSeq" id="WP_012118547.1">
    <property type="nucleotide sequence ID" value="NC_009725.2"/>
</dbReference>
<dbReference type="SMR" id="A7Z967"/>
<dbReference type="GeneID" id="93082358"/>
<dbReference type="KEGG" id="bay:RBAM_032130"/>
<dbReference type="HOGENOM" id="CLU_038115_2_0_9"/>
<dbReference type="UniPathway" id="UPA00031">
    <property type="reaction ID" value="UER00006"/>
</dbReference>
<dbReference type="Proteomes" id="UP000001120">
    <property type="component" value="Chromosome"/>
</dbReference>
<dbReference type="GO" id="GO:0005737">
    <property type="term" value="C:cytoplasm"/>
    <property type="evidence" value="ECO:0007669"/>
    <property type="project" value="UniProtKB-SubCell"/>
</dbReference>
<dbReference type="GO" id="GO:0005524">
    <property type="term" value="F:ATP binding"/>
    <property type="evidence" value="ECO:0007669"/>
    <property type="project" value="UniProtKB-KW"/>
</dbReference>
<dbReference type="GO" id="GO:0003879">
    <property type="term" value="F:ATP phosphoribosyltransferase activity"/>
    <property type="evidence" value="ECO:0007669"/>
    <property type="project" value="UniProtKB-UniRule"/>
</dbReference>
<dbReference type="GO" id="GO:0000105">
    <property type="term" value="P:L-histidine biosynthetic process"/>
    <property type="evidence" value="ECO:0007669"/>
    <property type="project" value="UniProtKB-UniRule"/>
</dbReference>
<dbReference type="CDD" id="cd13595">
    <property type="entry name" value="PBP2_HisGs"/>
    <property type="match status" value="1"/>
</dbReference>
<dbReference type="FunFam" id="3.40.190.10:FF:000008">
    <property type="entry name" value="ATP phosphoribosyltransferase"/>
    <property type="match status" value="1"/>
</dbReference>
<dbReference type="FunFam" id="3.40.190.10:FF:000011">
    <property type="entry name" value="ATP phosphoribosyltransferase"/>
    <property type="match status" value="1"/>
</dbReference>
<dbReference type="Gene3D" id="3.40.190.10">
    <property type="entry name" value="Periplasmic binding protein-like II"/>
    <property type="match status" value="2"/>
</dbReference>
<dbReference type="HAMAP" id="MF_01018">
    <property type="entry name" value="HisG_Short"/>
    <property type="match status" value="1"/>
</dbReference>
<dbReference type="InterPro" id="IPR013820">
    <property type="entry name" value="ATP_PRibTrfase_cat"/>
</dbReference>
<dbReference type="InterPro" id="IPR018198">
    <property type="entry name" value="ATP_PRibTrfase_CS"/>
</dbReference>
<dbReference type="InterPro" id="IPR001348">
    <property type="entry name" value="ATP_PRibTrfase_HisG"/>
</dbReference>
<dbReference type="InterPro" id="IPR024893">
    <property type="entry name" value="ATP_PRibTrfase_HisG_short"/>
</dbReference>
<dbReference type="NCBIfam" id="TIGR00070">
    <property type="entry name" value="hisG"/>
    <property type="match status" value="1"/>
</dbReference>
<dbReference type="PANTHER" id="PTHR21403:SF8">
    <property type="entry name" value="ATP PHOSPHORIBOSYLTRANSFERASE"/>
    <property type="match status" value="1"/>
</dbReference>
<dbReference type="PANTHER" id="PTHR21403">
    <property type="entry name" value="ATP PHOSPHORIBOSYLTRANSFERASE ATP-PRTASE"/>
    <property type="match status" value="1"/>
</dbReference>
<dbReference type="Pfam" id="PF01634">
    <property type="entry name" value="HisG"/>
    <property type="match status" value="1"/>
</dbReference>
<dbReference type="SUPFAM" id="SSF53850">
    <property type="entry name" value="Periplasmic binding protein-like II"/>
    <property type="match status" value="1"/>
</dbReference>
<dbReference type="PROSITE" id="PS01316">
    <property type="entry name" value="ATP_P_PHORIBOSYLTR"/>
    <property type="match status" value="1"/>
</dbReference>
<keyword id="KW-0028">Amino-acid biosynthesis</keyword>
<keyword id="KW-0067">ATP-binding</keyword>
<keyword id="KW-0963">Cytoplasm</keyword>
<keyword id="KW-0328">Glycosyltransferase</keyword>
<keyword id="KW-0368">Histidine biosynthesis</keyword>
<keyword id="KW-0547">Nucleotide-binding</keyword>
<keyword id="KW-0808">Transferase</keyword>
<comment type="function">
    <text evidence="1">Catalyzes the condensation of ATP and 5-phosphoribose 1-diphosphate to form N'-(5'-phosphoribosyl)-ATP (PR-ATP). Has a crucial role in the pathway because the rate of histidine biosynthesis seems to be controlled primarily by regulation of HisG enzymatic activity.</text>
</comment>
<comment type="catalytic activity">
    <reaction evidence="1">
        <text>1-(5-phospho-beta-D-ribosyl)-ATP + diphosphate = 5-phospho-alpha-D-ribose 1-diphosphate + ATP</text>
        <dbReference type="Rhea" id="RHEA:18473"/>
        <dbReference type="ChEBI" id="CHEBI:30616"/>
        <dbReference type="ChEBI" id="CHEBI:33019"/>
        <dbReference type="ChEBI" id="CHEBI:58017"/>
        <dbReference type="ChEBI" id="CHEBI:73183"/>
        <dbReference type="EC" id="2.4.2.17"/>
    </reaction>
</comment>
<comment type="pathway">
    <text evidence="1">Amino-acid biosynthesis; L-histidine biosynthesis; L-histidine from 5-phospho-alpha-D-ribose 1-diphosphate: step 1/9.</text>
</comment>
<comment type="subunit">
    <text evidence="1">Heteromultimer composed of HisG and HisZ subunits.</text>
</comment>
<comment type="subcellular location">
    <subcellularLocation>
        <location evidence="1">Cytoplasm</location>
    </subcellularLocation>
</comment>
<comment type="domain">
    <text>Lacks the C-terminal regulatory region which is replaced by HisZ.</text>
</comment>
<comment type="similarity">
    <text evidence="1">Belongs to the ATP phosphoribosyltransferase family. Short subfamily.</text>
</comment>
<accession>A7Z967</accession>
<name>HIS1_BACVZ</name>
<evidence type="ECO:0000255" key="1">
    <source>
        <dbReference type="HAMAP-Rule" id="MF_01018"/>
    </source>
</evidence>
<organism>
    <name type="scientific">Bacillus velezensis (strain DSM 23117 / BGSC 10A6 / LMG 26770 / FZB42)</name>
    <name type="common">Bacillus amyloliquefaciens subsp. plantarum</name>
    <dbReference type="NCBI Taxonomy" id="326423"/>
    <lineage>
        <taxon>Bacteria</taxon>
        <taxon>Bacillati</taxon>
        <taxon>Bacillota</taxon>
        <taxon>Bacilli</taxon>
        <taxon>Bacillales</taxon>
        <taxon>Bacillaceae</taxon>
        <taxon>Bacillus</taxon>
        <taxon>Bacillus amyloliquefaciens group</taxon>
    </lineage>
</organism>
<protein>
    <recommendedName>
        <fullName evidence="1">ATP phosphoribosyltransferase</fullName>
        <shortName evidence="1">ATP-PRT</shortName>
        <shortName evidence="1">ATP-PRTase</shortName>
        <ecNumber evidence="1">2.4.2.17</ecNumber>
    </recommendedName>
</protein>
<reference key="1">
    <citation type="journal article" date="2007" name="Nat. Biotechnol.">
        <title>Comparative analysis of the complete genome sequence of the plant growth-promoting bacterium Bacillus amyloliquefaciens FZB42.</title>
        <authorList>
            <person name="Chen X.H."/>
            <person name="Koumoutsi A."/>
            <person name="Scholz R."/>
            <person name="Eisenreich A."/>
            <person name="Schneider K."/>
            <person name="Heinemeyer I."/>
            <person name="Morgenstern B."/>
            <person name="Voss B."/>
            <person name="Hess W.R."/>
            <person name="Reva O."/>
            <person name="Junge H."/>
            <person name="Voigt B."/>
            <person name="Jungblut P.R."/>
            <person name="Vater J."/>
            <person name="Suessmuth R."/>
            <person name="Liesegang H."/>
            <person name="Strittmatter A."/>
            <person name="Gottschalk G."/>
            <person name="Borriss R."/>
        </authorList>
    </citation>
    <scope>NUCLEOTIDE SEQUENCE [LARGE SCALE GENOMIC DNA]</scope>
    <source>
        <strain>DSM 23117 / BGSC 10A6 / LMG 26770 / FZB42</strain>
    </source>
</reference>
<proteinExistence type="inferred from homology"/>